<feature type="chain" id="PRO_0000459211" description="Inactive oocyte-specific homeobox protein 2">
    <location>
        <begin position="1"/>
        <end position="151"/>
    </location>
</feature>
<feature type="region of interest" description="Disordered" evidence="1">
    <location>
        <begin position="1"/>
        <end position="97"/>
    </location>
</feature>
<feature type="compositionally biased region" description="Polar residues" evidence="1">
    <location>
        <begin position="37"/>
        <end position="54"/>
    </location>
</feature>
<protein>
    <recommendedName>
        <fullName evidence="4">Inactive oocyte-specific homeobox protein 2</fullName>
    </recommendedName>
</protein>
<comment type="function">
    <text evidence="2">In contrast to other Obox family proteins, displays a truncated homeobox domain and does not bind DNA.</text>
</comment>
<comment type="tissue specificity">
    <text evidence="2">Specifically expressed in oocytes and early embryos.</text>
</comment>
<comment type="developmental stage">
    <text evidence="2">Expressed maternally with high expression in oocytes and early embryos before expression declines after zygotic genome activation (ZGA).</text>
</comment>
<comment type="disruption phenotype">
    <text evidence="2">Female mice lacking maternally transcribed Obox1, Obox2, Obox5, Obox7 as well as zygotically expressed Obox3 and Obox4 are infertile: embryos arrest at two-four cell stage due to impaired zygotic genome activation (ZGA).</text>
</comment>
<comment type="similarity">
    <text evidence="4">Belongs to the paired homeobox family. Obox subfamily.</text>
</comment>
<comment type="sequence caution" evidence="4">
    <conflict type="erroneous gene model prediction">
        <sequence resource="EMBL-CDS" id="AAL68801"/>
    </conflict>
</comment>
<gene>
    <name evidence="3 5" type="primary">Obox2</name>
</gene>
<dbReference type="EMBL" id="AF461107">
    <property type="protein sequence ID" value="AAL68801.1"/>
    <property type="status" value="ALT_SEQ"/>
    <property type="molecule type" value="Genomic_DNA"/>
</dbReference>
<dbReference type="CCDS" id="CCDS52034.1"/>
<dbReference type="RefSeq" id="NP_663754.2">
    <property type="nucleotide sequence ID" value="NM_145708.2"/>
</dbReference>
<dbReference type="SMR" id="E9PXV9"/>
<dbReference type="STRING" id="10090.ENSMUSP00000042995"/>
<dbReference type="GlyGen" id="E9PXV9">
    <property type="glycosylation" value="1 site"/>
</dbReference>
<dbReference type="iPTMnet" id="E9PXV9"/>
<dbReference type="PhosphoSitePlus" id="E9PXV9"/>
<dbReference type="PaxDb" id="10090-ENSMUSP00000042995"/>
<dbReference type="Ensembl" id="ENSMUST00000036575.16">
    <property type="protein sequence ID" value="ENSMUSP00000042995.10"/>
    <property type="gene ID" value="ENSMUSG00000074369.13"/>
</dbReference>
<dbReference type="Ensembl" id="ENSMUST00000172478.3">
    <property type="protein sequence ID" value="ENSMUSP00000133450.2"/>
    <property type="gene ID" value="ENSMUSG00000074369.13"/>
</dbReference>
<dbReference type="Ensembl" id="ENSMUST00000174076.8">
    <property type="protein sequence ID" value="ENSMUSP00000133793.2"/>
    <property type="gene ID" value="ENSMUSG00000074369.13"/>
</dbReference>
<dbReference type="Ensembl" id="ENSMUST00000174305.8">
    <property type="protein sequence ID" value="ENSMUSP00000134275.2"/>
    <property type="gene ID" value="ENSMUSG00000074369.13"/>
</dbReference>
<dbReference type="GeneID" id="246792"/>
<dbReference type="KEGG" id="mmu:246792"/>
<dbReference type="UCSC" id="uc009fgg.2">
    <property type="organism name" value="mouse"/>
</dbReference>
<dbReference type="AGR" id="MGI:2149033"/>
<dbReference type="CTD" id="246792"/>
<dbReference type="MGI" id="MGI:2149033">
    <property type="gene designation" value="Obox2"/>
</dbReference>
<dbReference type="VEuPathDB" id="HostDB:ENSMUSG00000074369"/>
<dbReference type="GeneTree" id="ENSGT00390000000605"/>
<dbReference type="HOGENOM" id="CLU_129629_0_0_1"/>
<dbReference type="OrthoDB" id="80188at9989"/>
<dbReference type="BioGRID-ORCS" id="246792">
    <property type="hits" value="5 hits in 44 CRISPR screens"/>
</dbReference>
<dbReference type="ChiTaRS" id="Obox2">
    <property type="organism name" value="mouse"/>
</dbReference>
<dbReference type="PRO" id="PR:E9PXV9"/>
<dbReference type="Proteomes" id="UP000000589">
    <property type="component" value="Chromosome 7"/>
</dbReference>
<dbReference type="RNAct" id="E9PXV9">
    <property type="molecule type" value="protein"/>
</dbReference>
<dbReference type="Bgee" id="ENSMUSG00000074369">
    <property type="expression patterns" value="Expressed in secondary oocyte and 29 other cell types or tissues"/>
</dbReference>
<reference key="1">
    <citation type="journal article" date="2002" name="Genomics">
        <title>Obox, a family of homeobox genes preferentially expressed in germ cells.</title>
        <authorList>
            <person name="Rajkovic A."/>
            <person name="Yan C."/>
            <person name="Yan W."/>
            <person name="Klysik M."/>
            <person name="Matzuk M.M."/>
        </authorList>
    </citation>
    <scope>NUCLEOTIDE SEQUENCE [GENOMIC DNA]</scope>
    <source>
        <strain>C57BL/6J</strain>
    </source>
</reference>
<reference key="2">
    <citation type="journal article" date="2009" name="PLoS Biol.">
        <title>Lineage-specific biology revealed by a finished genome assembly of the mouse.</title>
        <authorList>
            <person name="Church D.M."/>
            <person name="Goodstadt L."/>
            <person name="Hillier L.W."/>
            <person name="Zody M.C."/>
            <person name="Goldstein S."/>
            <person name="She X."/>
            <person name="Bult C.J."/>
            <person name="Agarwala R."/>
            <person name="Cherry J.L."/>
            <person name="DiCuccio M."/>
            <person name="Hlavina W."/>
            <person name="Kapustin Y."/>
            <person name="Meric P."/>
            <person name="Maglott D."/>
            <person name="Birtle Z."/>
            <person name="Marques A.C."/>
            <person name="Graves T."/>
            <person name="Zhou S."/>
            <person name="Teague B."/>
            <person name="Potamousis K."/>
            <person name="Churas C."/>
            <person name="Place M."/>
            <person name="Herschleb J."/>
            <person name="Runnheim R."/>
            <person name="Forrest D."/>
            <person name="Amos-Landgraf J."/>
            <person name="Schwartz D.C."/>
            <person name="Cheng Z."/>
            <person name="Lindblad-Toh K."/>
            <person name="Eichler E.E."/>
            <person name="Ponting C.P."/>
        </authorList>
    </citation>
    <scope>NUCLEOTIDE SEQUENCE [LARGE SCALE GENOMIC DNA]</scope>
    <source>
        <strain>C57BL/6J</strain>
    </source>
</reference>
<reference key="3">
    <citation type="journal article" date="2023" name="Nature">
        <title>OBOX regulates murine zygotic genome activation and early development.</title>
        <authorList>
            <person name="Ji S."/>
            <person name="Chen F."/>
            <person name="Stein P."/>
            <person name="Wang J."/>
            <person name="Zhou Z."/>
            <person name="Wang L."/>
            <person name="Zhao Q."/>
            <person name="Lin Z."/>
            <person name="Liu B."/>
            <person name="Xu K."/>
            <person name="Lai F."/>
            <person name="Xiong Z."/>
            <person name="Hu X."/>
            <person name="Kong T."/>
            <person name="Kong F."/>
            <person name="Huang B."/>
            <person name="Wang Q."/>
            <person name="Xu Q."/>
            <person name="Fan Q."/>
            <person name="Liu L."/>
            <person name="Williams C.J."/>
            <person name="Schultz R.M."/>
            <person name="Xie W."/>
        </authorList>
    </citation>
    <scope>FUNCTION</scope>
    <scope>TISSUE SPECIFICITY</scope>
    <scope>DEVELOPMENTAL STAGE</scope>
    <scope>DISRUPTION PHENOTYPE</scope>
</reference>
<keyword id="KW-1185">Reference proteome</keyword>
<organism>
    <name type="scientific">Mus musculus</name>
    <name type="common">Mouse</name>
    <dbReference type="NCBI Taxonomy" id="10090"/>
    <lineage>
        <taxon>Eukaryota</taxon>
        <taxon>Metazoa</taxon>
        <taxon>Chordata</taxon>
        <taxon>Craniata</taxon>
        <taxon>Vertebrata</taxon>
        <taxon>Euteleostomi</taxon>
        <taxon>Mammalia</taxon>
        <taxon>Eutheria</taxon>
        <taxon>Euarchontoglires</taxon>
        <taxon>Glires</taxon>
        <taxon>Rodentia</taxon>
        <taxon>Myomorpha</taxon>
        <taxon>Muroidea</taxon>
        <taxon>Muridae</taxon>
        <taxon>Murinae</taxon>
        <taxon>Mus</taxon>
        <taxon>Mus</taxon>
    </lineage>
</organism>
<accession>E9PXV9</accession>
<accession>Q8VHG7</accession>
<name>OBOX2_MOUSE</name>
<sequence length="151" mass="17304">MAEGPSLHPKLQVDSNIPIEISSQIPQEPARNLAFQMRQSPLVTPGSTTKSSLSVPERNLLKQESEGPSRQSGCMPLSDKYVNKQTSPMASRKFRKERTVYTKEEQGLLQKHFDECSTQTRRKLWSWHYQLVLQRGRLRYGSRTTELSTGR</sequence>
<proteinExistence type="evidence at transcript level"/>
<evidence type="ECO:0000256" key="1">
    <source>
        <dbReference type="SAM" id="MobiDB-lite"/>
    </source>
</evidence>
<evidence type="ECO:0000269" key="2">
    <source>
    </source>
</evidence>
<evidence type="ECO:0000303" key="3">
    <source>
    </source>
</evidence>
<evidence type="ECO:0000305" key="4"/>
<evidence type="ECO:0000312" key="5">
    <source>
        <dbReference type="MGI" id="MGI:2149033"/>
    </source>
</evidence>